<dbReference type="EC" id="4.2.1.10" evidence="1"/>
<dbReference type="EMBL" id="CR555306">
    <property type="protein sequence ID" value="CAI06249.1"/>
    <property type="molecule type" value="Genomic_DNA"/>
</dbReference>
<dbReference type="RefSeq" id="WP_011235987.1">
    <property type="nucleotide sequence ID" value="NC_006513.1"/>
</dbReference>
<dbReference type="SMR" id="Q5P8W0"/>
<dbReference type="STRING" id="76114.ebA234"/>
<dbReference type="KEGG" id="eba:ebA234"/>
<dbReference type="eggNOG" id="COG0710">
    <property type="taxonomic scope" value="Bacteria"/>
</dbReference>
<dbReference type="HOGENOM" id="CLU_064444_0_0_4"/>
<dbReference type="OrthoDB" id="9813659at2"/>
<dbReference type="UniPathway" id="UPA00053">
    <property type="reaction ID" value="UER00086"/>
</dbReference>
<dbReference type="Proteomes" id="UP000006552">
    <property type="component" value="Chromosome"/>
</dbReference>
<dbReference type="GO" id="GO:0003855">
    <property type="term" value="F:3-dehydroquinate dehydratase activity"/>
    <property type="evidence" value="ECO:0007669"/>
    <property type="project" value="UniProtKB-UniRule"/>
</dbReference>
<dbReference type="GO" id="GO:0046279">
    <property type="term" value="P:3,4-dihydroxybenzoate biosynthetic process"/>
    <property type="evidence" value="ECO:0007669"/>
    <property type="project" value="TreeGrafter"/>
</dbReference>
<dbReference type="GO" id="GO:0008652">
    <property type="term" value="P:amino acid biosynthetic process"/>
    <property type="evidence" value="ECO:0007669"/>
    <property type="project" value="UniProtKB-KW"/>
</dbReference>
<dbReference type="GO" id="GO:0009073">
    <property type="term" value="P:aromatic amino acid family biosynthetic process"/>
    <property type="evidence" value="ECO:0007669"/>
    <property type="project" value="UniProtKB-KW"/>
</dbReference>
<dbReference type="GO" id="GO:0009423">
    <property type="term" value="P:chorismate biosynthetic process"/>
    <property type="evidence" value="ECO:0007669"/>
    <property type="project" value="UniProtKB-UniRule"/>
</dbReference>
<dbReference type="CDD" id="cd00502">
    <property type="entry name" value="DHQase_I"/>
    <property type="match status" value="1"/>
</dbReference>
<dbReference type="FunFam" id="3.20.20.70:FF:000047">
    <property type="entry name" value="3-dehydroquinate dehydratase"/>
    <property type="match status" value="1"/>
</dbReference>
<dbReference type="Gene3D" id="3.20.20.70">
    <property type="entry name" value="Aldolase class I"/>
    <property type="match status" value="1"/>
</dbReference>
<dbReference type="HAMAP" id="MF_00214">
    <property type="entry name" value="AroD"/>
    <property type="match status" value="1"/>
</dbReference>
<dbReference type="InterPro" id="IPR013785">
    <property type="entry name" value="Aldolase_TIM"/>
</dbReference>
<dbReference type="InterPro" id="IPR001381">
    <property type="entry name" value="DHquinase_I"/>
</dbReference>
<dbReference type="InterPro" id="IPR050146">
    <property type="entry name" value="Type-I_3-dehydroquinase"/>
</dbReference>
<dbReference type="NCBIfam" id="TIGR01093">
    <property type="entry name" value="aroD"/>
    <property type="match status" value="1"/>
</dbReference>
<dbReference type="PANTHER" id="PTHR43699">
    <property type="entry name" value="3-DEHYDROQUINATE DEHYDRATASE"/>
    <property type="match status" value="1"/>
</dbReference>
<dbReference type="PANTHER" id="PTHR43699:SF1">
    <property type="entry name" value="3-DEHYDROQUINATE DEHYDRATASE"/>
    <property type="match status" value="1"/>
</dbReference>
<dbReference type="Pfam" id="PF01487">
    <property type="entry name" value="DHquinase_I"/>
    <property type="match status" value="1"/>
</dbReference>
<dbReference type="SUPFAM" id="SSF51569">
    <property type="entry name" value="Aldolase"/>
    <property type="match status" value="1"/>
</dbReference>
<keyword id="KW-0028">Amino-acid biosynthesis</keyword>
<keyword id="KW-0057">Aromatic amino acid biosynthesis</keyword>
<keyword id="KW-0456">Lyase</keyword>
<keyword id="KW-1185">Reference proteome</keyword>
<keyword id="KW-0704">Schiff base</keyword>
<accession>Q5P8W0</accession>
<feature type="chain" id="PRO_0000325517" description="3-dehydroquinate dehydratase">
    <location>
        <begin position="1"/>
        <end position="260"/>
    </location>
</feature>
<feature type="active site" description="Proton donor/acceptor" evidence="1">
    <location>
        <position position="148"/>
    </location>
</feature>
<feature type="active site" description="Schiff-base intermediate with substrate" evidence="1">
    <location>
        <position position="175"/>
    </location>
</feature>
<feature type="binding site" evidence="1">
    <location>
        <begin position="50"/>
        <end position="52"/>
    </location>
    <ligand>
        <name>3-dehydroquinate</name>
        <dbReference type="ChEBI" id="CHEBI:32364"/>
    </ligand>
</feature>
<feature type="binding site" evidence="1">
    <location>
        <position position="86"/>
    </location>
    <ligand>
        <name>3-dehydroquinate</name>
        <dbReference type="ChEBI" id="CHEBI:32364"/>
    </ligand>
</feature>
<feature type="binding site" evidence="1">
    <location>
        <position position="217"/>
    </location>
    <ligand>
        <name>3-dehydroquinate</name>
        <dbReference type="ChEBI" id="CHEBI:32364"/>
    </ligand>
</feature>
<feature type="binding site" evidence="1">
    <location>
        <position position="236"/>
    </location>
    <ligand>
        <name>3-dehydroquinate</name>
        <dbReference type="ChEBI" id="CHEBI:32364"/>
    </ligand>
</feature>
<feature type="binding site" evidence="1">
    <location>
        <position position="240"/>
    </location>
    <ligand>
        <name>3-dehydroquinate</name>
        <dbReference type="ChEBI" id="CHEBI:32364"/>
    </ligand>
</feature>
<sequence>MAMTRSLEVKGQLVAGGKEPLICAPLVGRDEAAVLRELEVIVAKRPDLLEWRVDFYSGISDVERVVELAKEIRRSSAGIPVIFTRRSTREGGEPIGLSEDEVLSMYRAVARSGAVDFLDYELSSQPEHFEQAVALARETDTKLIASFHDFGKTPPVDEIVAKLVAMEEAGADIAKVAVMPQGLEDVLTLLQATLEAQKKIRLPVISMSMGAYGSLSRLFGWVFGSSVSFAVGQQASAPGQVPIEDLRTVLEVLQRSLKGE</sequence>
<gene>
    <name evidence="1" type="primary">aroD</name>
    <name type="ordered locus">AZOSEA01270</name>
    <name type="ORF">ebA234</name>
</gene>
<comment type="function">
    <text evidence="1">Involved in the third step of the chorismate pathway, which leads to the biosynthesis of aromatic amino acids. Catalyzes the cis-dehydration of 3-dehydroquinate (DHQ) and introduces the first double bond of the aromatic ring to yield 3-dehydroshikimate.</text>
</comment>
<comment type="catalytic activity">
    <reaction evidence="1">
        <text>3-dehydroquinate = 3-dehydroshikimate + H2O</text>
        <dbReference type="Rhea" id="RHEA:21096"/>
        <dbReference type="ChEBI" id="CHEBI:15377"/>
        <dbReference type="ChEBI" id="CHEBI:16630"/>
        <dbReference type="ChEBI" id="CHEBI:32364"/>
        <dbReference type="EC" id="4.2.1.10"/>
    </reaction>
</comment>
<comment type="pathway">
    <text evidence="1">Metabolic intermediate biosynthesis; chorismate biosynthesis; chorismate from D-erythrose 4-phosphate and phosphoenolpyruvate: step 3/7.</text>
</comment>
<comment type="subunit">
    <text evidence="1">Homodimer.</text>
</comment>
<comment type="similarity">
    <text evidence="1">Belongs to the type-I 3-dehydroquinase family.</text>
</comment>
<reference key="1">
    <citation type="journal article" date="2005" name="Arch. Microbiol.">
        <title>The genome sequence of an anaerobic aromatic-degrading denitrifying bacterium, strain EbN1.</title>
        <authorList>
            <person name="Rabus R."/>
            <person name="Kube M."/>
            <person name="Heider J."/>
            <person name="Beck A."/>
            <person name="Heitmann K."/>
            <person name="Widdel F."/>
            <person name="Reinhardt R."/>
        </authorList>
    </citation>
    <scope>NUCLEOTIDE SEQUENCE [LARGE SCALE GENOMIC DNA]</scope>
    <source>
        <strain>DSM 19018 / LMG 30748 / EbN1</strain>
    </source>
</reference>
<name>AROD_AROAE</name>
<proteinExistence type="inferred from homology"/>
<organism>
    <name type="scientific">Aromatoleum aromaticum (strain DSM 19018 / LMG 30748 / EbN1)</name>
    <name type="common">Azoarcus sp. (strain EbN1)</name>
    <dbReference type="NCBI Taxonomy" id="76114"/>
    <lineage>
        <taxon>Bacteria</taxon>
        <taxon>Pseudomonadati</taxon>
        <taxon>Pseudomonadota</taxon>
        <taxon>Betaproteobacteria</taxon>
        <taxon>Rhodocyclales</taxon>
        <taxon>Rhodocyclaceae</taxon>
        <taxon>Aromatoleum</taxon>
    </lineage>
</organism>
<protein>
    <recommendedName>
        <fullName evidence="1">3-dehydroquinate dehydratase</fullName>
        <shortName evidence="1">3-dehydroquinase</shortName>
        <ecNumber evidence="1">4.2.1.10</ecNumber>
    </recommendedName>
    <alternativeName>
        <fullName evidence="1">Type I DHQase</fullName>
    </alternativeName>
    <alternativeName>
        <fullName evidence="1">Type I dehydroquinase</fullName>
        <shortName evidence="1">DHQ1</shortName>
    </alternativeName>
</protein>
<evidence type="ECO:0000255" key="1">
    <source>
        <dbReference type="HAMAP-Rule" id="MF_00214"/>
    </source>
</evidence>